<name>E321_ADE35</name>
<protein>
    <recommendedName>
        <fullName>Early E3 20.6 kDa glycoprotein</fullName>
    </recommendedName>
</protein>
<dbReference type="EMBL" id="M23195">
    <property type="protein sequence ID" value="AAA42438.1"/>
    <property type="molecule type" value="Genomic_DNA"/>
</dbReference>
<dbReference type="EMBL" id="U32664">
    <property type="protein sequence ID" value="AAA75327.1"/>
    <property type="molecule type" value="Genomic_DNA"/>
</dbReference>
<dbReference type="PIR" id="D31162">
    <property type="entry name" value="ERAD86"/>
</dbReference>
<dbReference type="SMR" id="P15139"/>
<dbReference type="InterPro" id="IPR003471">
    <property type="entry name" value="Adeno_E3_CR1"/>
</dbReference>
<dbReference type="InterPro" id="IPR003470">
    <property type="entry name" value="Adeno_E3_CR2"/>
</dbReference>
<dbReference type="Pfam" id="PF02440">
    <property type="entry name" value="Adeno_E3_CR1"/>
    <property type="match status" value="1"/>
</dbReference>
<dbReference type="Pfam" id="PF02439">
    <property type="entry name" value="Adeno_E3_CR2"/>
    <property type="match status" value="1"/>
</dbReference>
<comment type="similarity">
    <text evidence="2">Belongs to the adenoviridae E3_20 family.</text>
</comment>
<evidence type="ECO:0000255" key="1"/>
<evidence type="ECO:0000305" key="2"/>
<accession>P15139</accession>
<sequence length="187" mass="20619">MVSTTTFLMLTSLATLTSARSHLTVTIGSNCTLKGPQGGHVFWWRIYDNGWFTKPCDQPGRFFCNGRDLTIINVTANDKGFYYGTDYKSSLDYNIIVLPSTTPPPRTTTFSSSSVANNTISNPTFAALLKRTVNNSTTSHTTISTSTISIIAAVTIGISILVFTITYYACCYRKDKHKGDPLLRFDI</sequence>
<organism>
    <name type="scientific">Human adenovirus B serotype 35</name>
    <name type="common">HAdV-35</name>
    <name type="synonym">Human adenovirus 35</name>
    <dbReference type="NCBI Taxonomy" id="10522"/>
    <lineage>
        <taxon>Viruses</taxon>
        <taxon>Varidnaviria</taxon>
        <taxon>Bamfordvirae</taxon>
        <taxon>Preplasmiviricota</taxon>
        <taxon>Tectiliviricetes</taxon>
        <taxon>Rowavirales</taxon>
        <taxon>Adenoviridae</taxon>
        <taxon>Mastadenovirus</taxon>
        <taxon>Human mastadenovirus B</taxon>
    </lineage>
</organism>
<proteinExistence type="inferred from homology"/>
<keyword id="KW-0244">Early protein</keyword>
<keyword id="KW-0325">Glycoprotein</keyword>
<organismHost>
    <name type="scientific">Homo sapiens</name>
    <name type="common">Human</name>
    <dbReference type="NCBI Taxonomy" id="9606"/>
</organismHost>
<reference key="1">
    <citation type="journal article" date="1988" name="J. Virol.">
        <title>Sequence and genetic organization of adenovirus type 35 early region 3.</title>
        <authorList>
            <person name="Flomenberg P.R."/>
            <person name="Chen M."/>
            <person name="Horwitz M.S."/>
        </authorList>
    </citation>
    <scope>NUCLEOTIDE SEQUENCE [GENOMIC DNA]</scope>
    <source>
        <strain>Holden</strain>
    </source>
</reference>
<reference key="2">
    <citation type="journal article" date="1996" name="Gene">
        <title>Sequence of the immunoregulatory early region 3 and flanking sequences of adenovirus type 35.</title>
        <authorList>
            <person name="Basler C.F."/>
            <person name="Droguett G."/>
            <person name="Horwitz M.S."/>
        </authorList>
    </citation>
    <scope>NUCLEOTIDE SEQUENCE [GENOMIC DNA]</scope>
    <source>
        <strain>Holden</strain>
    </source>
</reference>
<feature type="chain" id="PRO_0000221760" description="Early E3 20.6 kDa glycoprotein">
    <location>
        <begin position="1"/>
        <end position="187"/>
    </location>
</feature>
<feature type="glycosylation site" description="N-linked (GlcNAc...) asparagine; by host" evidence="1">
    <location>
        <position position="30"/>
    </location>
</feature>
<feature type="glycosylation site" description="N-linked (GlcNAc...) asparagine; by host" evidence="1">
    <location>
        <position position="73"/>
    </location>
</feature>
<feature type="glycosylation site" description="N-linked (GlcNAc...) asparagine; by host" evidence="1">
    <location>
        <position position="117"/>
    </location>
</feature>
<feature type="glycosylation site" description="N-linked (GlcNAc...) asparagine; by host" evidence="1">
    <location>
        <position position="134"/>
    </location>
</feature>
<feature type="glycosylation site" description="N-linked (GlcNAc...) asparagine; by host" evidence="1">
    <location>
        <position position="135"/>
    </location>
</feature>